<dbReference type="EC" id="4.2.1.96" evidence="1"/>
<dbReference type="EMBL" id="CP001389">
    <property type="protein sequence ID" value="ACP26981.1"/>
    <property type="molecule type" value="Genomic_DNA"/>
</dbReference>
<dbReference type="RefSeq" id="WP_012709729.1">
    <property type="nucleotide sequence ID" value="NC_012587.1"/>
</dbReference>
<dbReference type="RefSeq" id="YP_002827734.1">
    <property type="nucleotide sequence ID" value="NC_012587.1"/>
</dbReference>
<dbReference type="SMR" id="C3MAI8"/>
<dbReference type="STRING" id="394.NGR_c32490"/>
<dbReference type="KEGG" id="rhi:NGR_c32490"/>
<dbReference type="PATRIC" id="fig|394.7.peg.6091"/>
<dbReference type="eggNOG" id="COG2154">
    <property type="taxonomic scope" value="Bacteria"/>
</dbReference>
<dbReference type="HOGENOM" id="CLU_081974_3_2_5"/>
<dbReference type="OrthoDB" id="9794987at2"/>
<dbReference type="Proteomes" id="UP000001054">
    <property type="component" value="Chromosome"/>
</dbReference>
<dbReference type="GO" id="GO:0008124">
    <property type="term" value="F:4-alpha-hydroxytetrahydrobiopterin dehydratase activity"/>
    <property type="evidence" value="ECO:0007669"/>
    <property type="project" value="UniProtKB-UniRule"/>
</dbReference>
<dbReference type="GO" id="GO:0006729">
    <property type="term" value="P:tetrahydrobiopterin biosynthetic process"/>
    <property type="evidence" value="ECO:0007669"/>
    <property type="project" value="InterPro"/>
</dbReference>
<dbReference type="CDD" id="cd00914">
    <property type="entry name" value="PCD_DCoH_subfamily_b"/>
    <property type="match status" value="1"/>
</dbReference>
<dbReference type="Gene3D" id="3.30.1360.20">
    <property type="entry name" value="Transcriptional coactivator/pterin dehydratase"/>
    <property type="match status" value="1"/>
</dbReference>
<dbReference type="HAMAP" id="MF_00434">
    <property type="entry name" value="Pterin_4_alpha"/>
    <property type="match status" value="1"/>
</dbReference>
<dbReference type="InterPro" id="IPR036428">
    <property type="entry name" value="PCD_sf"/>
</dbReference>
<dbReference type="InterPro" id="IPR001533">
    <property type="entry name" value="Pterin_deHydtase"/>
</dbReference>
<dbReference type="NCBIfam" id="NF002017">
    <property type="entry name" value="PRK00823.1-2"/>
    <property type="match status" value="1"/>
</dbReference>
<dbReference type="NCBIfam" id="NF002018">
    <property type="entry name" value="PRK00823.1-3"/>
    <property type="match status" value="1"/>
</dbReference>
<dbReference type="PANTHER" id="PTHR12599">
    <property type="entry name" value="PTERIN-4-ALPHA-CARBINOLAMINE DEHYDRATASE"/>
    <property type="match status" value="1"/>
</dbReference>
<dbReference type="PANTHER" id="PTHR12599:SF0">
    <property type="entry name" value="PTERIN-4-ALPHA-CARBINOLAMINE DEHYDRATASE"/>
    <property type="match status" value="1"/>
</dbReference>
<dbReference type="Pfam" id="PF01329">
    <property type="entry name" value="Pterin_4a"/>
    <property type="match status" value="1"/>
</dbReference>
<dbReference type="SUPFAM" id="SSF55248">
    <property type="entry name" value="PCD-like"/>
    <property type="match status" value="1"/>
</dbReference>
<protein>
    <recommendedName>
        <fullName evidence="1">Putative pterin-4-alpha-carbinolamine dehydratase</fullName>
        <shortName evidence="1">PHS</shortName>
        <ecNumber evidence="1">4.2.1.96</ecNumber>
    </recommendedName>
    <alternativeName>
        <fullName evidence="1">4-alpha-hydroxy-tetrahydropterin dehydratase</fullName>
    </alternativeName>
    <alternativeName>
        <fullName evidence="1">Pterin carbinolamine dehydratase</fullName>
        <shortName evidence="1">PCD</shortName>
    </alternativeName>
</protein>
<evidence type="ECO:0000255" key="1">
    <source>
        <dbReference type="HAMAP-Rule" id="MF_00434"/>
    </source>
</evidence>
<organism>
    <name type="scientific">Sinorhizobium fredii (strain NBRC 101917 / NGR234)</name>
    <dbReference type="NCBI Taxonomy" id="394"/>
    <lineage>
        <taxon>Bacteria</taxon>
        <taxon>Pseudomonadati</taxon>
        <taxon>Pseudomonadota</taxon>
        <taxon>Alphaproteobacteria</taxon>
        <taxon>Hyphomicrobiales</taxon>
        <taxon>Rhizobiaceae</taxon>
        <taxon>Sinorhizobium/Ensifer group</taxon>
        <taxon>Sinorhizobium</taxon>
    </lineage>
</organism>
<keyword id="KW-0456">Lyase</keyword>
<keyword id="KW-1185">Reference proteome</keyword>
<feature type="chain" id="PRO_1000192931" description="Putative pterin-4-alpha-carbinolamine dehydratase">
    <location>
        <begin position="1"/>
        <end position="105"/>
    </location>
</feature>
<reference key="1">
    <citation type="journal article" date="2009" name="Appl. Environ. Microbiol.">
        <title>Rhizobium sp. strain NGR234 possesses a remarkable number of secretion systems.</title>
        <authorList>
            <person name="Schmeisser C."/>
            <person name="Liesegang H."/>
            <person name="Krysciak D."/>
            <person name="Bakkou N."/>
            <person name="Le Quere A."/>
            <person name="Wollherr A."/>
            <person name="Heinemeyer I."/>
            <person name="Morgenstern B."/>
            <person name="Pommerening-Roeser A."/>
            <person name="Flores M."/>
            <person name="Palacios R."/>
            <person name="Brenner S."/>
            <person name="Gottschalk G."/>
            <person name="Schmitz R.A."/>
            <person name="Broughton W.J."/>
            <person name="Perret X."/>
            <person name="Strittmatter A.W."/>
            <person name="Streit W.R."/>
        </authorList>
    </citation>
    <scope>NUCLEOTIDE SEQUENCE [LARGE SCALE GENOMIC DNA]</scope>
    <source>
        <strain>NBRC 101917 / NGR234</strain>
    </source>
</reference>
<name>PHS_SINFN</name>
<comment type="catalytic activity">
    <reaction evidence="1">
        <text>(4aS,6R)-4a-hydroxy-L-erythro-5,6,7,8-tetrahydrobiopterin = (6R)-L-erythro-6,7-dihydrobiopterin + H2O</text>
        <dbReference type="Rhea" id="RHEA:11920"/>
        <dbReference type="ChEBI" id="CHEBI:15377"/>
        <dbReference type="ChEBI" id="CHEBI:15642"/>
        <dbReference type="ChEBI" id="CHEBI:43120"/>
        <dbReference type="EC" id="4.2.1.96"/>
    </reaction>
</comment>
<comment type="similarity">
    <text evidence="1">Belongs to the pterin-4-alpha-carbinolamine dehydratase family.</text>
</comment>
<proteinExistence type="inferred from homology"/>
<accession>C3MAI8</accession>
<gene>
    <name type="ordered locus">NGR_c32490</name>
</gene>
<sequence length="105" mass="11937">MRPEKLDAEAIAEQLHRMEGWVLAEDGASIWKAFRFRNFAEAFSFMTQCALAAEKLNHHPEWFNVYNKVDVTLSTHDASGLTELDFKLAAKMDQAAAGRMPDHLK</sequence>